<gene>
    <name evidence="1" type="primary">uvrC</name>
    <name type="ordered locus">XCC2115</name>
</gene>
<comment type="function">
    <text evidence="1">The UvrABC repair system catalyzes the recognition and processing of DNA lesions. UvrC both incises the 5' and 3' sides of the lesion. The N-terminal half is responsible for the 3' incision and the C-terminal half is responsible for the 5' incision.</text>
</comment>
<comment type="subunit">
    <text evidence="1">Interacts with UvrB in an incision complex.</text>
</comment>
<comment type="subcellular location">
    <subcellularLocation>
        <location evidence="1">Cytoplasm</location>
    </subcellularLocation>
</comment>
<comment type="similarity">
    <text evidence="1">Belongs to the UvrC family.</text>
</comment>
<proteinExistence type="inferred from homology"/>
<reference key="1">
    <citation type="journal article" date="2002" name="Nature">
        <title>Comparison of the genomes of two Xanthomonas pathogens with differing host specificities.</title>
        <authorList>
            <person name="da Silva A.C.R."/>
            <person name="Ferro J.A."/>
            <person name="Reinach F.C."/>
            <person name="Farah C.S."/>
            <person name="Furlan L.R."/>
            <person name="Quaggio R.B."/>
            <person name="Monteiro-Vitorello C.B."/>
            <person name="Van Sluys M.A."/>
            <person name="Almeida N.F. Jr."/>
            <person name="Alves L.M.C."/>
            <person name="do Amaral A.M."/>
            <person name="Bertolini M.C."/>
            <person name="Camargo L.E.A."/>
            <person name="Camarotte G."/>
            <person name="Cannavan F."/>
            <person name="Cardozo J."/>
            <person name="Chambergo F."/>
            <person name="Ciapina L.P."/>
            <person name="Cicarelli R.M.B."/>
            <person name="Coutinho L.L."/>
            <person name="Cursino-Santos J.R."/>
            <person name="El-Dorry H."/>
            <person name="Faria J.B."/>
            <person name="Ferreira A.J.S."/>
            <person name="Ferreira R.C.C."/>
            <person name="Ferro M.I.T."/>
            <person name="Formighieri E.F."/>
            <person name="Franco M.C."/>
            <person name="Greggio C.C."/>
            <person name="Gruber A."/>
            <person name="Katsuyama A.M."/>
            <person name="Kishi L.T."/>
            <person name="Leite R.P."/>
            <person name="Lemos E.G.M."/>
            <person name="Lemos M.V.F."/>
            <person name="Locali E.C."/>
            <person name="Machado M.A."/>
            <person name="Madeira A.M.B.N."/>
            <person name="Martinez-Rossi N.M."/>
            <person name="Martins E.C."/>
            <person name="Meidanis J."/>
            <person name="Menck C.F.M."/>
            <person name="Miyaki C.Y."/>
            <person name="Moon D.H."/>
            <person name="Moreira L.M."/>
            <person name="Novo M.T.M."/>
            <person name="Okura V.K."/>
            <person name="Oliveira M.C."/>
            <person name="Oliveira V.R."/>
            <person name="Pereira H.A."/>
            <person name="Rossi A."/>
            <person name="Sena J.A.D."/>
            <person name="Silva C."/>
            <person name="de Souza R.F."/>
            <person name="Spinola L.A.F."/>
            <person name="Takita M.A."/>
            <person name="Tamura R.E."/>
            <person name="Teixeira E.C."/>
            <person name="Tezza R.I.D."/>
            <person name="Trindade dos Santos M."/>
            <person name="Truffi D."/>
            <person name="Tsai S.M."/>
            <person name="White F.F."/>
            <person name="Setubal J.C."/>
            <person name="Kitajima J.P."/>
        </authorList>
    </citation>
    <scope>NUCLEOTIDE SEQUENCE [LARGE SCALE GENOMIC DNA]</scope>
    <source>
        <strain>ATCC 33913 / DSM 3586 / NCPPB 528 / LMG 568 / P 25</strain>
    </source>
</reference>
<organism>
    <name type="scientific">Xanthomonas campestris pv. campestris (strain ATCC 33913 / DSM 3586 / NCPPB 528 / LMG 568 / P 25)</name>
    <dbReference type="NCBI Taxonomy" id="190485"/>
    <lineage>
        <taxon>Bacteria</taxon>
        <taxon>Pseudomonadati</taxon>
        <taxon>Pseudomonadota</taxon>
        <taxon>Gammaproteobacteria</taxon>
        <taxon>Lysobacterales</taxon>
        <taxon>Lysobacteraceae</taxon>
        <taxon>Xanthomonas</taxon>
    </lineage>
</organism>
<dbReference type="EMBL" id="AE008922">
    <property type="protein sequence ID" value="AAM41400.1"/>
    <property type="molecule type" value="Genomic_DNA"/>
</dbReference>
<dbReference type="RefSeq" id="NP_637476.1">
    <property type="nucleotide sequence ID" value="NC_003902.1"/>
</dbReference>
<dbReference type="RefSeq" id="WP_011037266.1">
    <property type="nucleotide sequence ID" value="NC_003902.1"/>
</dbReference>
<dbReference type="SMR" id="Q8P8W9"/>
<dbReference type="STRING" id="190485.XCC2115"/>
<dbReference type="EnsemblBacteria" id="AAM41400">
    <property type="protein sequence ID" value="AAM41400"/>
    <property type="gene ID" value="XCC2115"/>
</dbReference>
<dbReference type="KEGG" id="xcc:XCC2115"/>
<dbReference type="PATRIC" id="fig|190485.4.peg.2265"/>
<dbReference type="eggNOG" id="COG0322">
    <property type="taxonomic scope" value="Bacteria"/>
</dbReference>
<dbReference type="HOGENOM" id="CLU_014841_3_0_6"/>
<dbReference type="OrthoDB" id="9804933at2"/>
<dbReference type="Proteomes" id="UP000001010">
    <property type="component" value="Chromosome"/>
</dbReference>
<dbReference type="GO" id="GO:0005737">
    <property type="term" value="C:cytoplasm"/>
    <property type="evidence" value="ECO:0007669"/>
    <property type="project" value="UniProtKB-SubCell"/>
</dbReference>
<dbReference type="GO" id="GO:0009380">
    <property type="term" value="C:excinuclease repair complex"/>
    <property type="evidence" value="ECO:0000318"/>
    <property type="project" value="GO_Central"/>
</dbReference>
<dbReference type="GO" id="GO:0003677">
    <property type="term" value="F:DNA binding"/>
    <property type="evidence" value="ECO:0007669"/>
    <property type="project" value="UniProtKB-UniRule"/>
</dbReference>
<dbReference type="GO" id="GO:0009381">
    <property type="term" value="F:excinuclease ABC activity"/>
    <property type="evidence" value="ECO:0007669"/>
    <property type="project" value="UniProtKB-UniRule"/>
</dbReference>
<dbReference type="GO" id="GO:0006974">
    <property type="term" value="P:DNA damage response"/>
    <property type="evidence" value="ECO:0000318"/>
    <property type="project" value="GO_Central"/>
</dbReference>
<dbReference type="GO" id="GO:0006289">
    <property type="term" value="P:nucleotide-excision repair"/>
    <property type="evidence" value="ECO:0007669"/>
    <property type="project" value="UniProtKB-UniRule"/>
</dbReference>
<dbReference type="GO" id="GO:0009432">
    <property type="term" value="P:SOS response"/>
    <property type="evidence" value="ECO:0007669"/>
    <property type="project" value="UniProtKB-UniRule"/>
</dbReference>
<dbReference type="CDD" id="cd10434">
    <property type="entry name" value="GIY-YIG_UvrC_Cho"/>
    <property type="match status" value="1"/>
</dbReference>
<dbReference type="FunFam" id="1.10.150.20:FF:000005">
    <property type="entry name" value="UvrABC system protein C"/>
    <property type="match status" value="1"/>
</dbReference>
<dbReference type="FunFam" id="3.30.420.340:FF:000001">
    <property type="entry name" value="UvrABC system protein C"/>
    <property type="match status" value="1"/>
</dbReference>
<dbReference type="FunFam" id="3.40.1440.10:FF:000001">
    <property type="entry name" value="UvrABC system protein C"/>
    <property type="match status" value="1"/>
</dbReference>
<dbReference type="Gene3D" id="1.10.150.20">
    <property type="entry name" value="5' to 3' exonuclease, C-terminal subdomain"/>
    <property type="match status" value="1"/>
</dbReference>
<dbReference type="Gene3D" id="3.40.1440.10">
    <property type="entry name" value="GIY-YIG endonuclease"/>
    <property type="match status" value="1"/>
</dbReference>
<dbReference type="Gene3D" id="4.10.860.10">
    <property type="entry name" value="UVR domain"/>
    <property type="match status" value="1"/>
</dbReference>
<dbReference type="Gene3D" id="3.30.420.340">
    <property type="entry name" value="UvrC, RNAse H endonuclease domain"/>
    <property type="match status" value="1"/>
</dbReference>
<dbReference type="HAMAP" id="MF_00203">
    <property type="entry name" value="UvrC"/>
    <property type="match status" value="1"/>
</dbReference>
<dbReference type="InterPro" id="IPR000305">
    <property type="entry name" value="GIY-YIG_endonuc"/>
</dbReference>
<dbReference type="InterPro" id="IPR035901">
    <property type="entry name" value="GIY-YIG_endonuc_sf"/>
</dbReference>
<dbReference type="InterPro" id="IPR047296">
    <property type="entry name" value="GIY-YIG_UvrC_Cho"/>
</dbReference>
<dbReference type="InterPro" id="IPR003583">
    <property type="entry name" value="Hlx-hairpin-Hlx_DNA-bd_motif"/>
</dbReference>
<dbReference type="InterPro" id="IPR010994">
    <property type="entry name" value="RuvA_2-like"/>
</dbReference>
<dbReference type="InterPro" id="IPR001943">
    <property type="entry name" value="UVR_dom"/>
</dbReference>
<dbReference type="InterPro" id="IPR036876">
    <property type="entry name" value="UVR_dom_sf"/>
</dbReference>
<dbReference type="InterPro" id="IPR050066">
    <property type="entry name" value="UvrABC_protein_C"/>
</dbReference>
<dbReference type="InterPro" id="IPR004791">
    <property type="entry name" value="UvrC"/>
</dbReference>
<dbReference type="InterPro" id="IPR001162">
    <property type="entry name" value="UvrC_RNase_H_dom"/>
</dbReference>
<dbReference type="InterPro" id="IPR038476">
    <property type="entry name" value="UvrC_RNase_H_dom_sf"/>
</dbReference>
<dbReference type="NCBIfam" id="TIGR00194">
    <property type="entry name" value="uvrC"/>
    <property type="match status" value="1"/>
</dbReference>
<dbReference type="PANTHER" id="PTHR30562:SF1">
    <property type="entry name" value="UVRABC SYSTEM PROTEIN C"/>
    <property type="match status" value="1"/>
</dbReference>
<dbReference type="PANTHER" id="PTHR30562">
    <property type="entry name" value="UVRC/OXIDOREDUCTASE"/>
    <property type="match status" value="1"/>
</dbReference>
<dbReference type="Pfam" id="PF01541">
    <property type="entry name" value="GIY-YIG"/>
    <property type="match status" value="1"/>
</dbReference>
<dbReference type="Pfam" id="PF14520">
    <property type="entry name" value="HHH_5"/>
    <property type="match status" value="1"/>
</dbReference>
<dbReference type="Pfam" id="PF02151">
    <property type="entry name" value="UVR"/>
    <property type="match status" value="1"/>
</dbReference>
<dbReference type="Pfam" id="PF22920">
    <property type="entry name" value="UvrC_RNaseH"/>
    <property type="match status" value="1"/>
</dbReference>
<dbReference type="Pfam" id="PF08459">
    <property type="entry name" value="UvrC_RNaseH_dom"/>
    <property type="match status" value="1"/>
</dbReference>
<dbReference type="SMART" id="SM00465">
    <property type="entry name" value="GIYc"/>
    <property type="match status" value="1"/>
</dbReference>
<dbReference type="SMART" id="SM00278">
    <property type="entry name" value="HhH1"/>
    <property type="match status" value="2"/>
</dbReference>
<dbReference type="SUPFAM" id="SSF46600">
    <property type="entry name" value="C-terminal UvrC-binding domain of UvrB"/>
    <property type="match status" value="1"/>
</dbReference>
<dbReference type="SUPFAM" id="SSF82771">
    <property type="entry name" value="GIY-YIG endonuclease"/>
    <property type="match status" value="1"/>
</dbReference>
<dbReference type="SUPFAM" id="SSF47781">
    <property type="entry name" value="RuvA domain 2-like"/>
    <property type="match status" value="1"/>
</dbReference>
<dbReference type="PROSITE" id="PS50164">
    <property type="entry name" value="GIY_YIG"/>
    <property type="match status" value="1"/>
</dbReference>
<dbReference type="PROSITE" id="PS50151">
    <property type="entry name" value="UVR"/>
    <property type="match status" value="1"/>
</dbReference>
<dbReference type="PROSITE" id="PS50165">
    <property type="entry name" value="UVRC"/>
    <property type="match status" value="1"/>
</dbReference>
<protein>
    <recommendedName>
        <fullName evidence="1">UvrABC system protein C</fullName>
        <shortName evidence="1">Protein UvrC</shortName>
    </recommendedName>
    <alternativeName>
        <fullName evidence="1">Excinuclease ABC subunit C</fullName>
    </alternativeName>
</protein>
<sequence>MSARPQADFDGKAFAARLSTAPGVYRMYAADDSLLYVGKAGALRKRVGSYFNGTPKNARLTSMLSQVARMDVTVTRSEAEALLLENQLIKSLSPRYNVSLRDDKSYPYVLLTREDWPRIALHRGPRAVNGRYFGPYAGVTAVRETLNLMHKLFKLRSCEDSVFRNRSRPCLQYQIGRCSAPCVDLVAAQDYQEAVRRATMFLEGKSDQLGEEIMHSMQQASEALEFERAARLRDLLSSLRSMQNRQYVDGRAADLDVLACATQSSQACVLLLSFRDGRNLGTRSFFPKTNGEDSAEEILAAFVSQYYAEHAPPREILLDREIPDAELIEAALSAAAEHKVALKWNVRGERAGYLLLASRNAQLTLVTELTSQSAQHARSEALREMLGLAEQVKRVECFDISHTMGEATVASCVVFDASGPVRGQYRRFNISGITPGDDYAAMRQAIERRFRRAVEENGVLPDVLLIDGGAGQLAQAQAALADLGIENVLLVGVAKGEERRAGHEALILADGRELRPGAASPALQFIQQVRDEAHRFAITGHRGRRQKARMTSKLEDIPGIGPRRRASLLKHFGGLVGLKAAGEAEIARVEGVNAALAARIYANLHGLALPDAAGESSP</sequence>
<keyword id="KW-0963">Cytoplasm</keyword>
<keyword id="KW-0227">DNA damage</keyword>
<keyword id="KW-0228">DNA excision</keyword>
<keyword id="KW-0234">DNA repair</keyword>
<keyword id="KW-0267">Excision nuclease</keyword>
<keyword id="KW-1185">Reference proteome</keyword>
<keyword id="KW-0742">SOS response</keyword>
<name>UVRC_XANCP</name>
<evidence type="ECO:0000255" key="1">
    <source>
        <dbReference type="HAMAP-Rule" id="MF_00203"/>
    </source>
</evidence>
<accession>Q8P8W9</accession>
<feature type="chain" id="PRO_0000264978" description="UvrABC system protein C">
    <location>
        <begin position="1"/>
        <end position="618"/>
    </location>
</feature>
<feature type="domain" description="GIY-YIG" evidence="1">
    <location>
        <begin position="20"/>
        <end position="98"/>
    </location>
</feature>
<feature type="domain" description="UVR" evidence="1">
    <location>
        <begin position="207"/>
        <end position="242"/>
    </location>
</feature>